<dbReference type="EMBL" id="CP000049">
    <property type="protein sequence ID" value="AAX18115.1"/>
    <property type="molecule type" value="Genomic_DNA"/>
</dbReference>
<dbReference type="RefSeq" id="WP_011772733.1">
    <property type="nucleotide sequence ID" value="NZ_CP073176.1"/>
</dbReference>
<dbReference type="SMR" id="A1R0M4"/>
<dbReference type="KEGG" id="btu:BT0799"/>
<dbReference type="eggNOG" id="COG0779">
    <property type="taxonomic scope" value="Bacteria"/>
</dbReference>
<dbReference type="HOGENOM" id="CLU_070525_4_1_12"/>
<dbReference type="Proteomes" id="UP000001205">
    <property type="component" value="Chromosome"/>
</dbReference>
<dbReference type="GO" id="GO:0005829">
    <property type="term" value="C:cytosol"/>
    <property type="evidence" value="ECO:0007669"/>
    <property type="project" value="TreeGrafter"/>
</dbReference>
<dbReference type="GO" id="GO:0000028">
    <property type="term" value="P:ribosomal small subunit assembly"/>
    <property type="evidence" value="ECO:0007669"/>
    <property type="project" value="TreeGrafter"/>
</dbReference>
<dbReference type="GO" id="GO:0006412">
    <property type="term" value="P:translation"/>
    <property type="evidence" value="ECO:0007669"/>
    <property type="project" value="TreeGrafter"/>
</dbReference>
<dbReference type="Gene3D" id="3.30.300.70">
    <property type="entry name" value="RimP-like superfamily, N-terminal"/>
    <property type="match status" value="1"/>
</dbReference>
<dbReference type="HAMAP" id="MF_01077">
    <property type="entry name" value="RimP"/>
    <property type="match status" value="1"/>
</dbReference>
<dbReference type="InterPro" id="IPR003728">
    <property type="entry name" value="Ribosome_maturation_RimP"/>
</dbReference>
<dbReference type="InterPro" id="IPR028989">
    <property type="entry name" value="RimP_N"/>
</dbReference>
<dbReference type="InterPro" id="IPR035956">
    <property type="entry name" value="RimP_N_sf"/>
</dbReference>
<dbReference type="NCBIfam" id="NF011223">
    <property type="entry name" value="PRK14630.1"/>
    <property type="match status" value="1"/>
</dbReference>
<dbReference type="PANTHER" id="PTHR33867">
    <property type="entry name" value="RIBOSOME MATURATION FACTOR RIMP"/>
    <property type="match status" value="1"/>
</dbReference>
<dbReference type="PANTHER" id="PTHR33867:SF1">
    <property type="entry name" value="RIBOSOME MATURATION FACTOR RIMP"/>
    <property type="match status" value="1"/>
</dbReference>
<dbReference type="Pfam" id="PF02576">
    <property type="entry name" value="RimP_N"/>
    <property type="match status" value="1"/>
</dbReference>
<dbReference type="SUPFAM" id="SSF75420">
    <property type="entry name" value="YhbC-like, N-terminal domain"/>
    <property type="match status" value="1"/>
</dbReference>
<reference key="1">
    <citation type="submission" date="2004-12" db="EMBL/GenBank/DDBJ databases">
        <title>The genome sequence of Borrelia hermsii and Borrelia turicatae: comparative analysis of two agents of endemic N. America relapsing fever.</title>
        <authorList>
            <person name="Porcella S.F."/>
            <person name="Raffel S.J."/>
            <person name="Schrumpf M.E."/>
            <person name="Montgomery B."/>
            <person name="Smith T."/>
            <person name="Schwan T.G."/>
        </authorList>
    </citation>
    <scope>NUCLEOTIDE SEQUENCE [LARGE SCALE GENOMIC DNA]</scope>
    <source>
        <strain>91E135</strain>
    </source>
</reference>
<accession>A1R0M4</accession>
<gene>
    <name evidence="1" type="primary">rimP</name>
    <name type="ordered locus">BT0799</name>
</gene>
<organism>
    <name type="scientific">Borrelia turicatae (strain 91E135)</name>
    <dbReference type="NCBI Taxonomy" id="314724"/>
    <lineage>
        <taxon>Bacteria</taxon>
        <taxon>Pseudomonadati</taxon>
        <taxon>Spirochaetota</taxon>
        <taxon>Spirochaetia</taxon>
        <taxon>Spirochaetales</taxon>
        <taxon>Borreliaceae</taxon>
        <taxon>Borrelia</taxon>
    </lineage>
</organism>
<comment type="function">
    <text evidence="1">Required for maturation of 30S ribosomal subunits.</text>
</comment>
<comment type="subcellular location">
    <subcellularLocation>
        <location evidence="1">Cytoplasm</location>
    </subcellularLocation>
</comment>
<comment type="similarity">
    <text evidence="1">Belongs to the RimP family.</text>
</comment>
<proteinExistence type="inferred from homology"/>
<feature type="chain" id="PRO_1000149782" description="Ribosome maturation factor RimP">
    <location>
        <begin position="1"/>
        <end position="143"/>
    </location>
</feature>
<sequence>MVKIIDNSEVYNLIKNVTDQLGIEIIEINTFKKRDEGRIQIVLYKGNDFGVDTLCDLHKMILLSLEVVLKYNFSLEISTPGINRKIKSDREFKIFEGRKIKLMLDNDFEEGLILKAEADGFIFKTDTKEIRILYSDVKKAKLS</sequence>
<evidence type="ECO:0000255" key="1">
    <source>
        <dbReference type="HAMAP-Rule" id="MF_01077"/>
    </source>
</evidence>
<keyword id="KW-0963">Cytoplasm</keyword>
<keyword id="KW-1185">Reference proteome</keyword>
<keyword id="KW-0690">Ribosome biogenesis</keyword>
<name>RIMP_BORT9</name>
<protein>
    <recommendedName>
        <fullName evidence="1">Ribosome maturation factor RimP</fullName>
    </recommendedName>
</protein>